<keyword id="KW-0134">Cell wall</keyword>
<keyword id="KW-0378">Hydrolase</keyword>
<keyword id="KW-0460">Magnesium</keyword>
<keyword id="KW-0479">Metal-binding</keyword>
<keyword id="KW-1185">Reference proteome</keyword>
<keyword id="KW-0964">Secreted</keyword>
<name>EBSB_ENTFA</name>
<evidence type="ECO:0000250" key="1">
    <source>
        <dbReference type="UniProtKB" id="P0A7Y4"/>
    </source>
</evidence>
<evidence type="ECO:0000255" key="2">
    <source>
        <dbReference type="PROSITE-ProRule" id="PRU00408"/>
    </source>
</evidence>
<evidence type="ECO:0000269" key="3">
    <source>
    </source>
</evidence>
<evidence type="ECO:0000303" key="4">
    <source>
    </source>
</evidence>
<evidence type="ECO:0000305" key="5"/>
<evidence type="ECO:0000305" key="6">
    <source>
    </source>
</evidence>
<reference key="1">
    <citation type="journal article" date="1993" name="J. Bacteriol.">
        <title>Cloning and molecular analysis of genes affecting expression of binding substance, the recipient-encoded receptor(s) mediating mating aggregate formation in Enterococcus faecalis.</title>
        <authorList>
            <person name="Bensing B.A."/>
            <person name="Dunny G.M."/>
        </authorList>
    </citation>
    <scope>NUCLEOTIDE SEQUENCE [GENOMIC DNA]</scope>
    <scope>FUNCTION</scope>
    <scope>SUBCELLULAR LOCATION</scope>
    <source>
        <strain>OG1SSP</strain>
    </source>
</reference>
<reference key="2">
    <citation type="journal article" date="2003" name="Science">
        <title>Role of mobile DNA in the evolution of vancomycin-resistant Enterococcus faecalis.</title>
        <authorList>
            <person name="Paulsen I.T."/>
            <person name="Banerjei L."/>
            <person name="Myers G.S.A."/>
            <person name="Nelson K.E."/>
            <person name="Seshadri R."/>
            <person name="Read T.D."/>
            <person name="Fouts D.E."/>
            <person name="Eisen J.A."/>
            <person name="Gill S.R."/>
            <person name="Heidelberg J.F."/>
            <person name="Tettelin H."/>
            <person name="Dodson R.J."/>
            <person name="Umayam L.A."/>
            <person name="Brinkac L.M."/>
            <person name="Beanan M.J."/>
            <person name="Daugherty S.C."/>
            <person name="DeBoy R.T."/>
            <person name="Durkin S.A."/>
            <person name="Kolonay J.F."/>
            <person name="Madupu R."/>
            <person name="Nelson W.C."/>
            <person name="Vamathevan J.J."/>
            <person name="Tran B."/>
            <person name="Upton J."/>
            <person name="Hansen T."/>
            <person name="Shetty J."/>
            <person name="Khouri H.M."/>
            <person name="Utterback T.R."/>
            <person name="Radune D."/>
            <person name="Ketchum K.A."/>
            <person name="Dougherty B.A."/>
            <person name="Fraser C.M."/>
        </authorList>
    </citation>
    <scope>NUCLEOTIDE SEQUENCE [LARGE SCALE GENOMIC DNA]</scope>
    <source>
        <strain>ATCC 700802 / V583</strain>
    </source>
</reference>
<feature type="chain" id="PRO_0000195432" description="Putative hydrolase EbsB">
    <location>
        <begin position="1"/>
        <end position="135"/>
    </location>
</feature>
<feature type="domain" description="RNase H type-1" evidence="2">
    <location>
        <begin position="1"/>
        <end position="128"/>
    </location>
</feature>
<feature type="binding site" evidence="1">
    <location>
        <position position="7"/>
    </location>
    <ligand>
        <name>Mg(2+)</name>
        <dbReference type="ChEBI" id="CHEBI:18420"/>
        <label>1</label>
    </ligand>
</feature>
<feature type="binding site" evidence="1">
    <location>
        <position position="7"/>
    </location>
    <ligand>
        <name>Mg(2+)</name>
        <dbReference type="ChEBI" id="CHEBI:18420"/>
        <label>2</label>
    </ligand>
</feature>
<feature type="binding site" evidence="1">
    <location>
        <position position="45"/>
    </location>
    <ligand>
        <name>Mg(2+)</name>
        <dbReference type="ChEBI" id="CHEBI:18420"/>
        <label>1</label>
    </ligand>
</feature>
<feature type="binding site" evidence="1">
    <location>
        <position position="71"/>
    </location>
    <ligand>
        <name>Mg(2+)</name>
        <dbReference type="ChEBI" id="CHEBI:18420"/>
        <label>1</label>
    </ligand>
</feature>
<feature type="binding site" evidence="1">
    <location>
        <position position="120"/>
    </location>
    <ligand>
        <name>Mg(2+)</name>
        <dbReference type="ChEBI" id="CHEBI:18420"/>
        <label>2</label>
    </ligand>
</feature>
<feature type="sequence conflict" description="In Ref. 1; AAC36852." evidence="5" ref="1">
    <original>K</original>
    <variation>Q</variation>
    <location>
        <position position="55"/>
    </location>
</feature>
<feature type="sequence conflict" description="In Ref. 1; AAC36852." evidence="5" ref="1">
    <original>E</original>
    <variation>K</variation>
    <location>
        <position position="109"/>
    </location>
</feature>
<gene>
    <name evidence="4" type="primary">ebsB</name>
    <name type="ordered locus">EF_1728</name>
</gene>
<proteinExistence type="inferred from homology"/>
<accession>P36921</accession>
<sequence>MLRIYVDAATKGNPGESGGGIVYLTDQSRQQLHVPLGIVSNHEAEFKVLIEALKKAIANEDNQQTVLLHSDSKIVVQTIEKNYAKNEKYQPYLAEYQQLEKNFPLLLIEWLPESQNKAADMLARQALQKFYPNKK</sequence>
<dbReference type="EC" id="3.-.-.-" evidence="5"/>
<dbReference type="EMBL" id="L23802">
    <property type="protein sequence ID" value="AAC36852.1"/>
    <property type="molecule type" value="Unassigned_DNA"/>
</dbReference>
<dbReference type="EMBL" id="AE016830">
    <property type="protein sequence ID" value="AAO81503.1"/>
    <property type="molecule type" value="Genomic_DNA"/>
</dbReference>
<dbReference type="PIR" id="B49939">
    <property type="entry name" value="B49939"/>
</dbReference>
<dbReference type="RefSeq" id="NP_815433.1">
    <property type="nucleotide sequence ID" value="NC_004668.1"/>
</dbReference>
<dbReference type="RefSeq" id="WP_002369306.1">
    <property type="nucleotide sequence ID" value="NZ_KE136528.1"/>
</dbReference>
<dbReference type="SMR" id="P36921"/>
<dbReference type="STRING" id="226185.EF_1728"/>
<dbReference type="EnsemblBacteria" id="AAO81503">
    <property type="protein sequence ID" value="AAO81503"/>
    <property type="gene ID" value="EF_1728"/>
</dbReference>
<dbReference type="KEGG" id="efa:EF1728"/>
<dbReference type="PATRIC" id="fig|226185.45.peg.1784"/>
<dbReference type="eggNOG" id="COG0328">
    <property type="taxonomic scope" value="Bacteria"/>
</dbReference>
<dbReference type="HOGENOM" id="CLU_095977_2_1_9"/>
<dbReference type="Proteomes" id="UP000001415">
    <property type="component" value="Chromosome"/>
</dbReference>
<dbReference type="GO" id="GO:0005576">
    <property type="term" value="C:extracellular region"/>
    <property type="evidence" value="ECO:0007669"/>
    <property type="project" value="UniProtKB-KW"/>
</dbReference>
<dbReference type="GO" id="GO:0046872">
    <property type="term" value="F:metal ion binding"/>
    <property type="evidence" value="ECO:0007669"/>
    <property type="project" value="UniProtKB-KW"/>
</dbReference>
<dbReference type="GO" id="GO:0003676">
    <property type="term" value="F:nucleic acid binding"/>
    <property type="evidence" value="ECO:0007669"/>
    <property type="project" value="InterPro"/>
</dbReference>
<dbReference type="GO" id="GO:0004523">
    <property type="term" value="F:RNA-DNA hybrid ribonuclease activity"/>
    <property type="evidence" value="ECO:0007669"/>
    <property type="project" value="InterPro"/>
</dbReference>
<dbReference type="CDD" id="cd09279">
    <property type="entry name" value="RNase_HI_like"/>
    <property type="match status" value="1"/>
</dbReference>
<dbReference type="Gene3D" id="3.30.420.10">
    <property type="entry name" value="Ribonuclease H-like superfamily/Ribonuclease H"/>
    <property type="match status" value="1"/>
</dbReference>
<dbReference type="InterPro" id="IPR012337">
    <property type="entry name" value="RNaseH-like_sf"/>
</dbReference>
<dbReference type="InterPro" id="IPR002156">
    <property type="entry name" value="RNaseH_domain"/>
</dbReference>
<dbReference type="InterPro" id="IPR036397">
    <property type="entry name" value="RNaseH_sf"/>
</dbReference>
<dbReference type="Pfam" id="PF13456">
    <property type="entry name" value="RVT_3"/>
    <property type="match status" value="1"/>
</dbReference>
<dbReference type="SUPFAM" id="SSF53098">
    <property type="entry name" value="Ribonuclease H-like"/>
    <property type="match status" value="1"/>
</dbReference>
<dbReference type="PROSITE" id="PS50879">
    <property type="entry name" value="RNASE_H_1"/>
    <property type="match status" value="1"/>
</dbReference>
<protein>
    <recommendedName>
        <fullName evidence="5">Putative hydrolase EbsB</fullName>
        <ecNumber evidence="5">3.-.-.-</ecNumber>
    </recommendedName>
</protein>
<organism>
    <name type="scientific">Enterococcus faecalis (strain ATCC 700802 / V583)</name>
    <dbReference type="NCBI Taxonomy" id="226185"/>
    <lineage>
        <taxon>Bacteria</taxon>
        <taxon>Bacillati</taxon>
        <taxon>Bacillota</taxon>
        <taxon>Bacilli</taxon>
        <taxon>Lactobacillales</taxon>
        <taxon>Enterococcaceae</taxon>
        <taxon>Enterococcus</taxon>
    </lineage>
</organism>
<comment type="function">
    <text evidence="3">Seems to play some role in the cell surface expression of a chromosomally encoded receptor, named enterococcal binding substance (EBS), that mediates mating aggregate formation. Might interfere with the synthesis or assembly of EBS and function as a cell wall hydrolase.</text>
</comment>
<comment type="cofactor">
    <cofactor evidence="1">
        <name>Mg(2+)</name>
        <dbReference type="ChEBI" id="CHEBI:18420"/>
    </cofactor>
</comment>
<comment type="subcellular location">
    <subcellularLocation>
        <location evidence="6">Secreted</location>
        <location evidence="6">Cell wall</location>
    </subcellularLocation>
    <text evidence="5">Cell wall location was proposed in PubMed:8226689 based on a low sequence similarity to a cell wall hydrolase and a penicillin-binding protein. However, this protein has a best similarity to ribonucleases H which are expected to be cytoplasmic.</text>
</comment>
<comment type="similarity">
    <text evidence="5">Belongs to the RNase H family. EbsB subfamily.</text>
</comment>